<dbReference type="EMBL" id="AC004667">
    <property type="protein sequence ID" value="AAC61811.1"/>
    <property type="molecule type" value="Genomic_DNA"/>
</dbReference>
<dbReference type="EMBL" id="CP002685">
    <property type="protein sequence ID" value="AEC09088.1"/>
    <property type="molecule type" value="Genomic_DNA"/>
</dbReference>
<dbReference type="EMBL" id="BR000357">
    <property type="protein sequence ID" value="FAA00292.1"/>
    <property type="molecule type" value="mRNA"/>
</dbReference>
<dbReference type="PIR" id="E84766">
    <property type="entry name" value="E84766"/>
</dbReference>
<dbReference type="RefSeq" id="NP_181070.1">
    <property type="nucleotide sequence ID" value="NM_129079.2"/>
</dbReference>
<dbReference type="SMR" id="O82166"/>
<dbReference type="IntAct" id="O82166">
    <property type="interactions" value="6"/>
</dbReference>
<dbReference type="STRING" id="3702.O82166"/>
<dbReference type="PaxDb" id="3702-AT2G35270.1"/>
<dbReference type="ProteomicsDB" id="244669"/>
<dbReference type="EnsemblPlants" id="AT2G35270.1">
    <property type="protein sequence ID" value="AT2G35270.1"/>
    <property type="gene ID" value="AT2G35270"/>
</dbReference>
<dbReference type="GeneID" id="818094"/>
<dbReference type="Gramene" id="AT2G35270.1">
    <property type="protein sequence ID" value="AT2G35270.1"/>
    <property type="gene ID" value="AT2G35270"/>
</dbReference>
<dbReference type="KEGG" id="ath:AT2G35270"/>
<dbReference type="Araport" id="AT2G35270"/>
<dbReference type="TAIR" id="AT2G35270">
    <property type="gene designation" value="AHL21"/>
</dbReference>
<dbReference type="eggNOG" id="ENOG502QV4F">
    <property type="taxonomic scope" value="Eukaryota"/>
</dbReference>
<dbReference type="HOGENOM" id="CLU_039808_2_0_1"/>
<dbReference type="InParanoid" id="O82166"/>
<dbReference type="OMA" id="NMYSEAT"/>
<dbReference type="OrthoDB" id="1900597at2759"/>
<dbReference type="PhylomeDB" id="O82166"/>
<dbReference type="PRO" id="PR:O82166"/>
<dbReference type="Proteomes" id="UP000006548">
    <property type="component" value="Chromosome 2"/>
</dbReference>
<dbReference type="ExpressionAtlas" id="O82166">
    <property type="expression patterns" value="baseline and differential"/>
</dbReference>
<dbReference type="GO" id="GO:0005654">
    <property type="term" value="C:nucleoplasm"/>
    <property type="evidence" value="ECO:0000314"/>
    <property type="project" value="TAIR"/>
</dbReference>
<dbReference type="GO" id="GO:0003677">
    <property type="term" value="F:DNA binding"/>
    <property type="evidence" value="ECO:0000314"/>
    <property type="project" value="TAIR"/>
</dbReference>
<dbReference type="GO" id="GO:0003680">
    <property type="term" value="F:minor groove of adenine-thymine-rich DNA binding"/>
    <property type="evidence" value="ECO:0000314"/>
    <property type="project" value="UniProtKB"/>
</dbReference>
<dbReference type="GO" id="GO:0048653">
    <property type="term" value="P:anther development"/>
    <property type="evidence" value="ECO:0000315"/>
    <property type="project" value="TAIR"/>
</dbReference>
<dbReference type="GO" id="GO:0048440">
    <property type="term" value="P:carpel development"/>
    <property type="evidence" value="ECO:0000315"/>
    <property type="project" value="TAIR"/>
</dbReference>
<dbReference type="GO" id="GO:0045892">
    <property type="term" value="P:negative regulation of DNA-templated transcription"/>
    <property type="evidence" value="ECO:0000270"/>
    <property type="project" value="TAIR"/>
</dbReference>
<dbReference type="CDD" id="cd11378">
    <property type="entry name" value="DUF296"/>
    <property type="match status" value="1"/>
</dbReference>
<dbReference type="FunFam" id="3.30.1330.80:FF:000001">
    <property type="entry name" value="AT-hook motif nuclear-localized protein"/>
    <property type="match status" value="1"/>
</dbReference>
<dbReference type="Gene3D" id="3.30.1330.80">
    <property type="entry name" value="Hypothetical protein, similar to alpha- acetolactate decarboxylase, domain 2"/>
    <property type="match status" value="1"/>
</dbReference>
<dbReference type="InterPro" id="IPR014476">
    <property type="entry name" value="AHL15-29"/>
</dbReference>
<dbReference type="InterPro" id="IPR005175">
    <property type="entry name" value="PPC_dom"/>
</dbReference>
<dbReference type="PANTHER" id="PTHR31100">
    <property type="entry name" value="AT-HOOK MOTIF NUCLEAR-LOCALIZED PROTEIN 15"/>
    <property type="match status" value="1"/>
</dbReference>
<dbReference type="PANTHER" id="PTHR31100:SF67">
    <property type="entry name" value="AT-HOOK MOTIF NUCLEAR-LOCALIZED PROTEIN 21"/>
    <property type="match status" value="1"/>
</dbReference>
<dbReference type="Pfam" id="PF03479">
    <property type="entry name" value="PCC"/>
    <property type="match status" value="1"/>
</dbReference>
<dbReference type="SUPFAM" id="SSF117856">
    <property type="entry name" value="AF0104/ALDC/Ptd012-like"/>
    <property type="match status" value="1"/>
</dbReference>
<dbReference type="PROSITE" id="PS51742">
    <property type="entry name" value="PPC"/>
    <property type="match status" value="1"/>
</dbReference>
<proteinExistence type="evidence at transcript level"/>
<comment type="function">
    <text evidence="3">Transcription factor that specifically binds AT-rich DNA sequences related to the nuclear matrix attachment regions (MARs). Binds to the MARs present in the ETTIN (ETT) promoter leading to a negative regulation of its gene expression. Functions as a molecular node downstream of the homeotic protein AGAMOUS (AG), regulating patterning and differentiation of reproductive organs. Acts as a chromatin remodeling factor that modifies the architecture of ETTIN (ETT) chromatin by modulating H3 methylation leading to the regulation of ETT expression. Seems to be involved in the regulation of a set of reproductives genes including CRABS CLAW (CRC), JAGGED (JAG) and KNUCKLES (KNU).</text>
</comment>
<comment type="subcellular location">
    <subcellularLocation>
        <location evidence="3">Nucleus</location>
        <location evidence="3">Nucleoplasm</location>
    </subcellularLocation>
</comment>
<comment type="tissue specificity">
    <text evidence="3">Preferentially expressed in roots, but also in flowers and leaves. Detected in the inflorescence meristem, floral primordia and developing reproductive organs.</text>
</comment>
<comment type="developmental stage">
    <text evidence="3">Expressed throughout floral primordia at stages 1 through 4. At stage 6 and later, expression is confined to reproductive organ primordia. At stages later than stage 10, localizes in developing ovules and anther locules.</text>
</comment>
<comment type="domain">
    <text evidence="4">The PPC domain mediates interactions between AHL proteins.</text>
</comment>
<comment type="disruption phenotype">
    <text evidence="3">Reproductive defects.</text>
</comment>
<comment type="miscellaneous">
    <text evidence="3">Overexpression of AHL21 results in reproductive defects such as excessive outgrowth of stigmatic tissues, short valves, and excessive proliferation of a carpelloid organ at the lateral side of a pistil with exposed ovules.</text>
</comment>
<keyword id="KW-0238">DNA-binding</keyword>
<keyword id="KW-0539">Nucleus</keyword>
<keyword id="KW-1185">Reference proteome</keyword>
<keyword id="KW-0804">Transcription</keyword>
<keyword id="KW-0805">Transcription regulation</keyword>
<sequence length="285" mass="29144">MAGLDLGTTSRYVHNVDGGGGGQFTTDNHHEDDGGAGGNHHHHHHNHNHHQGLDLIASNDNSGLGGGGGGGSGDLVMRRPRGRPAGSKNKPKPPVIVTRESANTLRAHILEVGSGCDVFECISTYARRRQRGICVLSGTGTVTNVSIRQPTAAGAVVTLRGTFEILSLSGSFLPPPAPPGATSLTIFLAGAQGQVVGGNVVGELMAAGPVMVMAASFTNVAYERLPLDEHEEHLQSGGGGGGGNMYSEATGGGGGLPFFNLPMSMPQIGVESWQGNHAGAGRAPF</sequence>
<gene>
    <name evidence="5" type="primary">AHL21</name>
    <name evidence="6" type="synonym">GIK</name>
    <name evidence="8" type="ordered locus">At2g35270</name>
    <name evidence="9" type="ORF">T4C15.6</name>
</gene>
<protein>
    <recommendedName>
        <fullName evidence="10">AT-hook motif nuclear-localized protein 21</fullName>
    </recommendedName>
    <alternativeName>
        <fullName evidence="6">Protein GIANT KILLER</fullName>
    </alternativeName>
</protein>
<organism>
    <name type="scientific">Arabidopsis thaliana</name>
    <name type="common">Mouse-ear cress</name>
    <dbReference type="NCBI Taxonomy" id="3702"/>
    <lineage>
        <taxon>Eukaryota</taxon>
        <taxon>Viridiplantae</taxon>
        <taxon>Streptophyta</taxon>
        <taxon>Embryophyta</taxon>
        <taxon>Tracheophyta</taxon>
        <taxon>Spermatophyta</taxon>
        <taxon>Magnoliopsida</taxon>
        <taxon>eudicotyledons</taxon>
        <taxon>Gunneridae</taxon>
        <taxon>Pentapetalae</taxon>
        <taxon>rosids</taxon>
        <taxon>malvids</taxon>
        <taxon>Brassicales</taxon>
        <taxon>Brassicaceae</taxon>
        <taxon>Camelineae</taxon>
        <taxon>Arabidopsis</taxon>
    </lineage>
</organism>
<accession>O82166</accession>
<feature type="chain" id="PRO_0000432039" description="AT-hook motif nuclear-localized protein 21">
    <location>
        <begin position="1"/>
        <end position="285"/>
    </location>
</feature>
<feature type="domain" description="PPC" evidence="1">
    <location>
        <begin position="102"/>
        <end position="238"/>
    </location>
</feature>
<feature type="DNA-binding region" description="A.T hook" evidence="7">
    <location>
        <begin position="78"/>
        <end position="90"/>
    </location>
</feature>
<feature type="region of interest" description="Disordered" evidence="2">
    <location>
        <begin position="17"/>
        <end position="95"/>
    </location>
</feature>
<feature type="compositionally biased region" description="Basic residues" evidence="2">
    <location>
        <begin position="39"/>
        <end position="50"/>
    </location>
</feature>
<feature type="compositionally biased region" description="Gly residues" evidence="2">
    <location>
        <begin position="63"/>
        <end position="73"/>
    </location>
</feature>
<evidence type="ECO:0000255" key="1">
    <source>
        <dbReference type="PROSITE-ProRule" id="PRU01078"/>
    </source>
</evidence>
<evidence type="ECO:0000256" key="2">
    <source>
        <dbReference type="SAM" id="MobiDB-lite"/>
    </source>
</evidence>
<evidence type="ECO:0000269" key="3">
    <source>
    </source>
</evidence>
<evidence type="ECO:0000269" key="4">
    <source>
    </source>
</evidence>
<evidence type="ECO:0000303" key="5">
    <source>
    </source>
</evidence>
<evidence type="ECO:0000303" key="6">
    <source>
    </source>
</evidence>
<evidence type="ECO:0000305" key="7"/>
<evidence type="ECO:0000312" key="8">
    <source>
        <dbReference type="Araport" id="AT2G35270"/>
    </source>
</evidence>
<evidence type="ECO:0000312" key="9">
    <source>
        <dbReference type="EMBL" id="AAC61811.1"/>
    </source>
</evidence>
<evidence type="ECO:0000312" key="10">
    <source>
        <dbReference type="EMBL" id="FAA00292.1"/>
    </source>
</evidence>
<name>AHL21_ARATH</name>
<reference key="1">
    <citation type="journal article" date="1999" name="Nature">
        <title>Sequence and analysis of chromosome 2 of the plant Arabidopsis thaliana.</title>
        <authorList>
            <person name="Lin X."/>
            <person name="Kaul S."/>
            <person name="Rounsley S.D."/>
            <person name="Shea T.P."/>
            <person name="Benito M.-I."/>
            <person name="Town C.D."/>
            <person name="Fujii C.Y."/>
            <person name="Mason T.M."/>
            <person name="Bowman C.L."/>
            <person name="Barnstead M.E."/>
            <person name="Feldblyum T.V."/>
            <person name="Buell C.R."/>
            <person name="Ketchum K.A."/>
            <person name="Lee J.J."/>
            <person name="Ronning C.M."/>
            <person name="Koo H.L."/>
            <person name="Moffat K.S."/>
            <person name="Cronin L.A."/>
            <person name="Shen M."/>
            <person name="Pai G."/>
            <person name="Van Aken S."/>
            <person name="Umayam L."/>
            <person name="Tallon L.J."/>
            <person name="Gill J.E."/>
            <person name="Adams M.D."/>
            <person name="Carrera A.J."/>
            <person name="Creasy T.H."/>
            <person name="Goodman H.M."/>
            <person name="Somerville C.R."/>
            <person name="Copenhaver G.P."/>
            <person name="Preuss D."/>
            <person name="Nierman W.C."/>
            <person name="White O."/>
            <person name="Eisen J.A."/>
            <person name="Salzberg S.L."/>
            <person name="Fraser C.M."/>
            <person name="Venter J.C."/>
        </authorList>
    </citation>
    <scope>NUCLEOTIDE SEQUENCE [LARGE SCALE GENOMIC DNA]</scope>
    <source>
        <strain>cv. Columbia</strain>
    </source>
</reference>
<reference key="2">
    <citation type="journal article" date="2017" name="Plant J.">
        <title>Araport11: a complete reannotation of the Arabidopsis thaliana reference genome.</title>
        <authorList>
            <person name="Cheng C.Y."/>
            <person name="Krishnakumar V."/>
            <person name="Chan A.P."/>
            <person name="Thibaud-Nissen F."/>
            <person name="Schobel S."/>
            <person name="Town C.D."/>
        </authorList>
    </citation>
    <scope>GENOME REANNOTATION</scope>
    <source>
        <strain>cv. Columbia</strain>
    </source>
</reference>
<reference key="3">
    <citation type="journal article" date="2004" name="Plant Mol. Biol.">
        <title>Identification of a novel plant MAR DNA binding protein localized on chromosomal surfaces.</title>
        <authorList>
            <person name="Fujimoto S."/>
            <person name="Matsunaga S."/>
            <person name="Yonemura M."/>
            <person name="Uchiyama S."/>
            <person name="Azuma T."/>
            <person name="Fukui K."/>
        </authorList>
    </citation>
    <scope>IDENTIFICATION</scope>
    <scope>GENE FAMILY</scope>
    <scope>NOMENCLATURE</scope>
    <source>
        <strain>cv. Columbia</strain>
    </source>
</reference>
<reference key="4">
    <citation type="journal article" date="2009" name="PLoS Biol.">
        <title>AGAMOUS controls GIANT KILLER, a multifunctional chromatin modifier in reproductive organ patterning and differentiation.</title>
        <authorList>
            <person name="Ng K.H."/>
            <person name="Yu H."/>
            <person name="Ito T."/>
        </authorList>
    </citation>
    <scope>FUNCTION</scope>
    <scope>TISSUE SPECIFICITY</scope>
    <scope>SUBCELLULAR LOCATION</scope>
    <scope>DEVELOPMENTAL STAGE</scope>
    <scope>DISRUPTION PHENOTYPE</scope>
</reference>
<reference key="5">
    <citation type="journal article" date="2010" name="Plant Signal. Behav.">
        <title>Shedding light on the role of AT-hook/PPC domain protein in Arabidopsis thaliana.</title>
        <authorList>
            <person name="Ng K.H."/>
            <person name="Ito T."/>
        </authorList>
    </citation>
    <scope>REVIEW</scope>
</reference>
<reference key="6">
    <citation type="journal article" date="2013" name="Proc. Natl. Acad. Sci. U.S.A.">
        <title>Arabidopsis thaliana AHL family modulates hypocotyl growth redundantly by interacting with each other via the PPC/DUF296 domain.</title>
        <authorList>
            <person name="Zhao J."/>
            <person name="Favero D.S."/>
            <person name="Peng H."/>
            <person name="Neff M.M."/>
        </authorList>
    </citation>
    <scope>GENE FAMILY</scope>
    <scope>DOMAIN PPC</scope>
</reference>